<evidence type="ECO:0000255" key="1">
    <source>
        <dbReference type="HAMAP-Rule" id="MF_01013"/>
    </source>
</evidence>
<reference key="1">
    <citation type="journal article" date="2009" name="J. Bacteriol.">
        <title>Complete genome sequence and comparative genome analysis of enteropathogenic Escherichia coli O127:H6 strain E2348/69.</title>
        <authorList>
            <person name="Iguchi A."/>
            <person name="Thomson N.R."/>
            <person name="Ogura Y."/>
            <person name="Saunders D."/>
            <person name="Ooka T."/>
            <person name="Henderson I.R."/>
            <person name="Harris D."/>
            <person name="Asadulghani M."/>
            <person name="Kurokawa K."/>
            <person name="Dean P."/>
            <person name="Kenny B."/>
            <person name="Quail M.A."/>
            <person name="Thurston S."/>
            <person name="Dougan G."/>
            <person name="Hayashi T."/>
            <person name="Parkhill J."/>
            <person name="Frankel G."/>
        </authorList>
    </citation>
    <scope>NUCLEOTIDE SEQUENCE [LARGE SCALE GENOMIC DNA]</scope>
    <source>
        <strain>E2348/69 / EPEC</strain>
    </source>
</reference>
<comment type="function">
    <text evidence="1">IGPS catalyzes the conversion of PRFAR and glutamine to IGP, AICAR and glutamate. The HisF subunit catalyzes the cyclization activity that produces IGP and AICAR from PRFAR using the ammonia provided by the HisH subunit.</text>
</comment>
<comment type="catalytic activity">
    <reaction evidence="1">
        <text>5-[(5-phospho-1-deoxy-D-ribulos-1-ylimino)methylamino]-1-(5-phospho-beta-D-ribosyl)imidazole-4-carboxamide + L-glutamine = D-erythro-1-(imidazol-4-yl)glycerol 3-phosphate + 5-amino-1-(5-phospho-beta-D-ribosyl)imidazole-4-carboxamide + L-glutamate + H(+)</text>
        <dbReference type="Rhea" id="RHEA:24793"/>
        <dbReference type="ChEBI" id="CHEBI:15378"/>
        <dbReference type="ChEBI" id="CHEBI:29985"/>
        <dbReference type="ChEBI" id="CHEBI:58278"/>
        <dbReference type="ChEBI" id="CHEBI:58359"/>
        <dbReference type="ChEBI" id="CHEBI:58475"/>
        <dbReference type="ChEBI" id="CHEBI:58525"/>
        <dbReference type="EC" id="4.3.2.10"/>
    </reaction>
</comment>
<comment type="pathway">
    <text evidence="1">Amino-acid biosynthesis; L-histidine biosynthesis; L-histidine from 5-phospho-alpha-D-ribose 1-diphosphate: step 5/9.</text>
</comment>
<comment type="subunit">
    <text evidence="1">Heterodimer of HisH and HisF.</text>
</comment>
<comment type="subcellular location">
    <subcellularLocation>
        <location evidence="1">Cytoplasm</location>
    </subcellularLocation>
</comment>
<comment type="similarity">
    <text evidence="1">Belongs to the HisA/HisF family.</text>
</comment>
<gene>
    <name evidence="1" type="primary">hisF</name>
    <name type="ordered locus">E2348C_2166</name>
</gene>
<protein>
    <recommendedName>
        <fullName evidence="1">Imidazole glycerol phosphate synthase subunit HisF</fullName>
        <ecNumber evidence="1">4.3.2.10</ecNumber>
    </recommendedName>
    <alternativeName>
        <fullName evidence="1">IGP synthase cyclase subunit</fullName>
    </alternativeName>
    <alternativeName>
        <fullName evidence="1">IGP synthase subunit HisF</fullName>
    </alternativeName>
    <alternativeName>
        <fullName evidence="1">ImGP synthase subunit HisF</fullName>
        <shortName evidence="1">IGPS subunit HisF</shortName>
    </alternativeName>
</protein>
<keyword id="KW-0028">Amino-acid biosynthesis</keyword>
<keyword id="KW-0963">Cytoplasm</keyword>
<keyword id="KW-0368">Histidine biosynthesis</keyword>
<keyword id="KW-0456">Lyase</keyword>
<keyword id="KW-1185">Reference proteome</keyword>
<organism>
    <name type="scientific">Escherichia coli O127:H6 (strain E2348/69 / EPEC)</name>
    <dbReference type="NCBI Taxonomy" id="574521"/>
    <lineage>
        <taxon>Bacteria</taxon>
        <taxon>Pseudomonadati</taxon>
        <taxon>Pseudomonadota</taxon>
        <taxon>Gammaproteobacteria</taxon>
        <taxon>Enterobacterales</taxon>
        <taxon>Enterobacteriaceae</taxon>
        <taxon>Escherichia</taxon>
    </lineage>
</organism>
<accession>B7UT62</accession>
<sequence>MLAKRIIPCLDVRDGQVVKGVQFRNHEIIGDIVPLAKRYAEEGADELVFYDITASSDGRVVDKSWVSRVAEVIDIPFCVAGGIKSLEDAAKILSFGADKISINSPALADPTLITRLADRFGVQCIVVGIDTWYDAETGKYHVNQYTGDESRTRVTQWETLDWVQEVQKRGAGEIVLNMMNQDGVRNGYDLEQLKKVREVCHVPLIASGGAGTMEHFLEAFRDADVDGALAASVFHKQIINIGELKAYLATQGVEIRIC</sequence>
<feature type="chain" id="PRO_1000148919" description="Imidazole glycerol phosphate synthase subunit HisF">
    <location>
        <begin position="1"/>
        <end position="258"/>
    </location>
</feature>
<feature type="active site" evidence="1">
    <location>
        <position position="11"/>
    </location>
</feature>
<feature type="active site" evidence="1">
    <location>
        <position position="130"/>
    </location>
</feature>
<proteinExistence type="inferred from homology"/>
<dbReference type="EC" id="4.3.2.10" evidence="1"/>
<dbReference type="EMBL" id="FM180568">
    <property type="protein sequence ID" value="CAS09714.1"/>
    <property type="molecule type" value="Genomic_DNA"/>
</dbReference>
<dbReference type="RefSeq" id="WP_000880182.1">
    <property type="nucleotide sequence ID" value="NC_011601.1"/>
</dbReference>
<dbReference type="SMR" id="B7UT62"/>
<dbReference type="GeneID" id="86946979"/>
<dbReference type="KEGG" id="ecg:E2348C_2166"/>
<dbReference type="HOGENOM" id="CLU_048577_4_0_6"/>
<dbReference type="UniPathway" id="UPA00031">
    <property type="reaction ID" value="UER00010"/>
</dbReference>
<dbReference type="Proteomes" id="UP000008205">
    <property type="component" value="Chromosome"/>
</dbReference>
<dbReference type="GO" id="GO:0005737">
    <property type="term" value="C:cytoplasm"/>
    <property type="evidence" value="ECO:0007669"/>
    <property type="project" value="UniProtKB-SubCell"/>
</dbReference>
<dbReference type="GO" id="GO:0000107">
    <property type="term" value="F:imidazoleglycerol-phosphate synthase activity"/>
    <property type="evidence" value="ECO:0007669"/>
    <property type="project" value="UniProtKB-UniRule"/>
</dbReference>
<dbReference type="GO" id="GO:0016829">
    <property type="term" value="F:lyase activity"/>
    <property type="evidence" value="ECO:0007669"/>
    <property type="project" value="UniProtKB-KW"/>
</dbReference>
<dbReference type="GO" id="GO:0000105">
    <property type="term" value="P:L-histidine biosynthetic process"/>
    <property type="evidence" value="ECO:0007669"/>
    <property type="project" value="UniProtKB-UniRule"/>
</dbReference>
<dbReference type="CDD" id="cd04731">
    <property type="entry name" value="HisF"/>
    <property type="match status" value="1"/>
</dbReference>
<dbReference type="FunFam" id="3.20.20.70:FF:000006">
    <property type="entry name" value="Imidazole glycerol phosphate synthase subunit HisF"/>
    <property type="match status" value="1"/>
</dbReference>
<dbReference type="Gene3D" id="3.20.20.70">
    <property type="entry name" value="Aldolase class I"/>
    <property type="match status" value="1"/>
</dbReference>
<dbReference type="HAMAP" id="MF_01013">
    <property type="entry name" value="HisF"/>
    <property type="match status" value="1"/>
</dbReference>
<dbReference type="InterPro" id="IPR013785">
    <property type="entry name" value="Aldolase_TIM"/>
</dbReference>
<dbReference type="InterPro" id="IPR006062">
    <property type="entry name" value="His_biosynth"/>
</dbReference>
<dbReference type="InterPro" id="IPR004651">
    <property type="entry name" value="HisF"/>
</dbReference>
<dbReference type="InterPro" id="IPR050064">
    <property type="entry name" value="IGPS_HisA/HisF"/>
</dbReference>
<dbReference type="InterPro" id="IPR011060">
    <property type="entry name" value="RibuloseP-bd_barrel"/>
</dbReference>
<dbReference type="NCBIfam" id="TIGR00735">
    <property type="entry name" value="hisF"/>
    <property type="match status" value="1"/>
</dbReference>
<dbReference type="PANTHER" id="PTHR21235:SF2">
    <property type="entry name" value="IMIDAZOLE GLYCEROL PHOSPHATE SYNTHASE HISHF"/>
    <property type="match status" value="1"/>
</dbReference>
<dbReference type="PANTHER" id="PTHR21235">
    <property type="entry name" value="IMIDAZOLE GLYCEROL PHOSPHATE SYNTHASE SUBUNIT HISF/H IGP SYNTHASE SUBUNIT HISF/H"/>
    <property type="match status" value="1"/>
</dbReference>
<dbReference type="Pfam" id="PF00977">
    <property type="entry name" value="His_biosynth"/>
    <property type="match status" value="1"/>
</dbReference>
<dbReference type="SUPFAM" id="SSF51366">
    <property type="entry name" value="Ribulose-phoshate binding barrel"/>
    <property type="match status" value="1"/>
</dbReference>
<name>HIS6_ECO27</name>